<comment type="function">
    <text evidence="1">Component of the small ribosomal subunit. The ribosome is a large ribonucleoprotein complex responsible for the synthesis of proteins in the cell.</text>
</comment>
<comment type="subunit">
    <text evidence="1">Component of the small ribosomal subunit.</text>
</comment>
<comment type="subcellular location">
    <subcellularLocation>
        <location evidence="1">Cytoplasm</location>
    </subcellularLocation>
</comment>
<comment type="similarity">
    <text evidence="2">Belongs to the universal ribosomal protein uS19 family.</text>
</comment>
<name>RS15_PONAB</name>
<accession>Q5RDI7</accession>
<evidence type="ECO:0000250" key="1">
    <source>
        <dbReference type="UniProtKB" id="P62841"/>
    </source>
</evidence>
<evidence type="ECO:0000305" key="2"/>
<keyword id="KW-0007">Acetylation</keyword>
<keyword id="KW-0963">Cytoplasm</keyword>
<keyword id="KW-1017">Isopeptide bond</keyword>
<keyword id="KW-1185">Reference proteome</keyword>
<keyword id="KW-0687">Ribonucleoprotein</keyword>
<keyword id="KW-0689">Ribosomal protein</keyword>
<keyword id="KW-0832">Ubl conjugation</keyword>
<organism>
    <name type="scientific">Pongo abelii</name>
    <name type="common">Sumatran orangutan</name>
    <name type="synonym">Pongo pygmaeus abelii</name>
    <dbReference type="NCBI Taxonomy" id="9601"/>
    <lineage>
        <taxon>Eukaryota</taxon>
        <taxon>Metazoa</taxon>
        <taxon>Chordata</taxon>
        <taxon>Craniata</taxon>
        <taxon>Vertebrata</taxon>
        <taxon>Euteleostomi</taxon>
        <taxon>Mammalia</taxon>
        <taxon>Eutheria</taxon>
        <taxon>Euarchontoglires</taxon>
        <taxon>Primates</taxon>
        <taxon>Haplorrhini</taxon>
        <taxon>Catarrhini</taxon>
        <taxon>Hominidae</taxon>
        <taxon>Pongo</taxon>
    </lineage>
</organism>
<proteinExistence type="evidence at transcript level"/>
<feature type="initiator methionine" description="Removed" evidence="1">
    <location>
        <position position="1"/>
    </location>
</feature>
<feature type="chain" id="PRO_0000130031" description="Small ribosomal subunit protein uS19">
    <location>
        <begin position="2"/>
        <end position="145"/>
    </location>
</feature>
<feature type="modified residue" description="N-acetylalanine" evidence="1">
    <location>
        <position position="2"/>
    </location>
</feature>
<feature type="cross-link" description="Glycyl lysine isopeptide (Lys-Gly) (interchain with G-Cter in SUMO2)" evidence="1">
    <location>
        <position position="108"/>
    </location>
</feature>
<dbReference type="EMBL" id="CR857922">
    <property type="protein sequence ID" value="CAH90170.1"/>
    <property type="molecule type" value="mRNA"/>
</dbReference>
<dbReference type="RefSeq" id="NP_001125055.1">
    <property type="nucleotide sequence ID" value="NM_001131583.1"/>
</dbReference>
<dbReference type="SMR" id="Q5RDI7"/>
<dbReference type="FunCoup" id="Q5RDI7">
    <property type="interactions" value="2534"/>
</dbReference>
<dbReference type="STRING" id="9601.ENSPPYP00000010457"/>
<dbReference type="GeneID" id="100171936"/>
<dbReference type="KEGG" id="pon:100171936"/>
<dbReference type="CTD" id="6209"/>
<dbReference type="eggNOG" id="KOG0898">
    <property type="taxonomic scope" value="Eukaryota"/>
</dbReference>
<dbReference type="HOGENOM" id="CLU_097347_1_0_1"/>
<dbReference type="InParanoid" id="Q5RDI7"/>
<dbReference type="OrthoDB" id="10258210at2759"/>
<dbReference type="TreeFam" id="TF318650"/>
<dbReference type="Proteomes" id="UP000001595">
    <property type="component" value="Chromosome 19"/>
</dbReference>
<dbReference type="GO" id="GO:0022627">
    <property type="term" value="C:cytosolic small ribosomal subunit"/>
    <property type="evidence" value="ECO:0007669"/>
    <property type="project" value="TreeGrafter"/>
</dbReference>
<dbReference type="GO" id="GO:0003723">
    <property type="term" value="F:RNA binding"/>
    <property type="evidence" value="ECO:0007669"/>
    <property type="project" value="InterPro"/>
</dbReference>
<dbReference type="GO" id="GO:0003735">
    <property type="term" value="F:structural constituent of ribosome"/>
    <property type="evidence" value="ECO:0007669"/>
    <property type="project" value="InterPro"/>
</dbReference>
<dbReference type="GO" id="GO:0000028">
    <property type="term" value="P:ribosomal small subunit assembly"/>
    <property type="evidence" value="ECO:0007669"/>
    <property type="project" value="TreeGrafter"/>
</dbReference>
<dbReference type="GO" id="GO:0006412">
    <property type="term" value="P:translation"/>
    <property type="evidence" value="ECO:0007669"/>
    <property type="project" value="InterPro"/>
</dbReference>
<dbReference type="FunFam" id="3.30.860.10:FF:000002">
    <property type="entry name" value="40S ribosomal protein S15"/>
    <property type="match status" value="1"/>
</dbReference>
<dbReference type="Gene3D" id="3.30.860.10">
    <property type="entry name" value="30s Ribosomal Protein S19, Chain A"/>
    <property type="match status" value="1"/>
</dbReference>
<dbReference type="HAMAP" id="MF_00531">
    <property type="entry name" value="Ribosomal_uS19"/>
    <property type="match status" value="1"/>
</dbReference>
<dbReference type="InterPro" id="IPR002222">
    <property type="entry name" value="Ribosomal_uS19"/>
</dbReference>
<dbReference type="InterPro" id="IPR020934">
    <property type="entry name" value="Ribosomal_uS19_CS"/>
</dbReference>
<dbReference type="InterPro" id="IPR005713">
    <property type="entry name" value="Ribosomal_uS19_euk/arc"/>
</dbReference>
<dbReference type="InterPro" id="IPR023575">
    <property type="entry name" value="Ribosomal_uS19_SF"/>
</dbReference>
<dbReference type="NCBIfam" id="NF003121">
    <property type="entry name" value="PRK04038.1"/>
    <property type="match status" value="1"/>
</dbReference>
<dbReference type="NCBIfam" id="TIGR01025">
    <property type="entry name" value="uS19_arch"/>
    <property type="match status" value="1"/>
</dbReference>
<dbReference type="PANTHER" id="PTHR11880">
    <property type="entry name" value="RIBOSOMAL PROTEIN S19P FAMILY MEMBER"/>
    <property type="match status" value="1"/>
</dbReference>
<dbReference type="PANTHER" id="PTHR11880:SF2">
    <property type="entry name" value="SMALL RIBOSOMAL SUBUNIT PROTEIN US19"/>
    <property type="match status" value="1"/>
</dbReference>
<dbReference type="Pfam" id="PF00203">
    <property type="entry name" value="Ribosomal_S19"/>
    <property type="match status" value="1"/>
</dbReference>
<dbReference type="PIRSF" id="PIRSF002144">
    <property type="entry name" value="Ribosomal_S19"/>
    <property type="match status" value="1"/>
</dbReference>
<dbReference type="PRINTS" id="PR00975">
    <property type="entry name" value="RIBOSOMALS19"/>
</dbReference>
<dbReference type="SUPFAM" id="SSF54570">
    <property type="entry name" value="Ribosomal protein S19"/>
    <property type="match status" value="1"/>
</dbReference>
<dbReference type="PROSITE" id="PS00323">
    <property type="entry name" value="RIBOSOMAL_S19"/>
    <property type="match status" value="1"/>
</dbReference>
<sequence>MAEVEQKKKRTFRKFTYRGVDLDQLLDMSYEQLMQLYSARQRRRLNRGLRRKQHSLLKRLRKAKKEAPPMEKPEVVKTHLRDMIILPEMVGSMVGVYNGKTFNQVEIKPEMIGHYLGEFSITYKPVKHGRPGIGATHSSRFIPLK</sequence>
<protein>
    <recommendedName>
        <fullName evidence="2">Small ribosomal subunit protein uS19</fullName>
    </recommendedName>
    <alternativeName>
        <fullName>40S ribosomal protein S15</fullName>
    </alternativeName>
</protein>
<gene>
    <name type="primary">RPS15</name>
</gene>
<reference key="1">
    <citation type="submission" date="2004-11" db="EMBL/GenBank/DDBJ databases">
        <authorList>
            <consortium name="The German cDNA consortium"/>
        </authorList>
    </citation>
    <scope>NUCLEOTIDE SEQUENCE [LARGE SCALE MRNA]</scope>
    <source>
        <tissue>Kidney</tissue>
    </source>
</reference>